<feature type="chain" id="PRO_1000088458" description="Nucleoid occlusion factor SlmA">
    <location>
        <begin position="1"/>
        <end position="198"/>
    </location>
</feature>
<feature type="domain" description="HTH tetR-type" evidence="1">
    <location>
        <begin position="10"/>
        <end position="70"/>
    </location>
</feature>
<feature type="DNA-binding region" description="H-T-H motif" evidence="1">
    <location>
        <begin position="33"/>
        <end position="52"/>
    </location>
</feature>
<feature type="coiled-coil region" evidence="1">
    <location>
        <begin position="117"/>
        <end position="144"/>
    </location>
</feature>
<gene>
    <name evidence="1" type="primary">slmA</name>
    <name type="ordered locus">EcolC_0070</name>
</gene>
<evidence type="ECO:0000255" key="1">
    <source>
        <dbReference type="HAMAP-Rule" id="MF_01839"/>
    </source>
</evidence>
<protein>
    <recommendedName>
        <fullName evidence="1">Nucleoid occlusion factor SlmA</fullName>
    </recommendedName>
</protein>
<proteinExistence type="inferred from homology"/>
<sequence length="198" mass="22836">MAEKQTAKRNRREEILQSLALMLESSDGSQRITTAKLAASVGVSEAALYRHFPSKTRMFDSLIEFIEDSLITRINLILKDEKDTTARLRLIVLLLLGFGERNPGLTRILTGHALMFEQDRLQGRINQLFERIEAQLRQVLREKRMREGEGYTTDETLLASQILAFCEGMLSRFVRSEFKYRPTDDFDARWPLIAAQLQ</sequence>
<accession>B1IYV9</accession>
<keyword id="KW-0131">Cell cycle</keyword>
<keyword id="KW-0132">Cell division</keyword>
<keyword id="KW-0175">Coiled coil</keyword>
<keyword id="KW-0963">Cytoplasm</keyword>
<keyword id="KW-0238">DNA-binding</keyword>
<comment type="function">
    <text evidence="1">Required for nucleoid occlusion (NO) phenomenon, which prevents Z-ring formation and cell division over the nucleoid. Acts as a DNA-associated cell division inhibitor that binds simultaneously chromosomal DNA and FtsZ, and disrupts the assembly of FtsZ polymers. SlmA-DNA-binding sequences (SBS) are dispersed on non-Ter regions of the chromosome, preventing FtsZ polymerization at these regions.</text>
</comment>
<comment type="subunit">
    <text evidence="1">Homodimer. Interacts with FtsZ.</text>
</comment>
<comment type="subcellular location">
    <subcellularLocation>
        <location evidence="1">Cytoplasm</location>
        <location evidence="1">Nucleoid</location>
    </subcellularLocation>
</comment>
<comment type="similarity">
    <text evidence="1">Belongs to the nucleoid occlusion factor SlmA family.</text>
</comment>
<organism>
    <name type="scientific">Escherichia coli (strain ATCC 8739 / DSM 1576 / NBRC 3972 / NCIMB 8545 / WDCM 00012 / Crooks)</name>
    <dbReference type="NCBI Taxonomy" id="481805"/>
    <lineage>
        <taxon>Bacteria</taxon>
        <taxon>Pseudomonadati</taxon>
        <taxon>Pseudomonadota</taxon>
        <taxon>Gammaproteobacteria</taxon>
        <taxon>Enterobacterales</taxon>
        <taxon>Enterobacteriaceae</taxon>
        <taxon>Escherichia</taxon>
    </lineage>
</organism>
<name>SLMA_ECOLC</name>
<dbReference type="EMBL" id="CP000946">
    <property type="protein sequence ID" value="ACA75756.1"/>
    <property type="molecule type" value="Genomic_DNA"/>
</dbReference>
<dbReference type="RefSeq" id="WP_000818601.1">
    <property type="nucleotide sequence ID" value="NZ_MTFT01000034.1"/>
</dbReference>
<dbReference type="SMR" id="B1IYV9"/>
<dbReference type="GeneID" id="93778356"/>
<dbReference type="KEGG" id="ecl:EcolC_0070"/>
<dbReference type="HOGENOM" id="CLU_069356_5_0_6"/>
<dbReference type="GO" id="GO:0043590">
    <property type="term" value="C:bacterial nucleoid"/>
    <property type="evidence" value="ECO:0007669"/>
    <property type="project" value="UniProtKB-UniRule"/>
</dbReference>
<dbReference type="GO" id="GO:0005737">
    <property type="term" value="C:cytoplasm"/>
    <property type="evidence" value="ECO:0007669"/>
    <property type="project" value="UniProtKB-UniRule"/>
</dbReference>
<dbReference type="GO" id="GO:0003700">
    <property type="term" value="F:DNA-binding transcription factor activity"/>
    <property type="evidence" value="ECO:0007669"/>
    <property type="project" value="TreeGrafter"/>
</dbReference>
<dbReference type="GO" id="GO:0000976">
    <property type="term" value="F:transcription cis-regulatory region binding"/>
    <property type="evidence" value="ECO:0007669"/>
    <property type="project" value="TreeGrafter"/>
</dbReference>
<dbReference type="GO" id="GO:0051301">
    <property type="term" value="P:cell division"/>
    <property type="evidence" value="ECO:0007669"/>
    <property type="project" value="UniProtKB-KW"/>
</dbReference>
<dbReference type="GO" id="GO:0010974">
    <property type="term" value="P:negative regulation of division septum assembly"/>
    <property type="evidence" value="ECO:0007669"/>
    <property type="project" value="InterPro"/>
</dbReference>
<dbReference type="FunFam" id="1.10.357.10:FF:000002">
    <property type="entry name" value="Nucleoid occlusion factor SlmA"/>
    <property type="match status" value="1"/>
</dbReference>
<dbReference type="Gene3D" id="1.10.357.10">
    <property type="entry name" value="Tetracycline Repressor, domain 2"/>
    <property type="match status" value="1"/>
</dbReference>
<dbReference type="HAMAP" id="MF_01839">
    <property type="entry name" value="NO_factor_SlmA"/>
    <property type="match status" value="1"/>
</dbReference>
<dbReference type="InterPro" id="IPR023772">
    <property type="entry name" value="DNA-bd_HTH_TetR-type_CS"/>
</dbReference>
<dbReference type="InterPro" id="IPR009057">
    <property type="entry name" value="Homeodomain-like_sf"/>
</dbReference>
<dbReference type="InterPro" id="IPR050109">
    <property type="entry name" value="HTH-type_TetR-like_transc_reg"/>
</dbReference>
<dbReference type="InterPro" id="IPR001647">
    <property type="entry name" value="HTH_TetR"/>
</dbReference>
<dbReference type="InterPro" id="IPR023769">
    <property type="entry name" value="NO_SlmA"/>
</dbReference>
<dbReference type="InterPro" id="IPR054580">
    <property type="entry name" value="SlmA-like_C"/>
</dbReference>
<dbReference type="InterPro" id="IPR036271">
    <property type="entry name" value="Tet_transcr_reg_TetR-rel_C_sf"/>
</dbReference>
<dbReference type="NCBIfam" id="NF007015">
    <property type="entry name" value="PRK09480.1"/>
    <property type="match status" value="1"/>
</dbReference>
<dbReference type="PANTHER" id="PTHR30055">
    <property type="entry name" value="HTH-TYPE TRANSCRIPTIONAL REGULATOR RUTR"/>
    <property type="match status" value="1"/>
</dbReference>
<dbReference type="PANTHER" id="PTHR30055:SF183">
    <property type="entry name" value="NUCLEOID OCCLUSION FACTOR SLMA"/>
    <property type="match status" value="1"/>
</dbReference>
<dbReference type="Pfam" id="PF22276">
    <property type="entry name" value="SlmA-like_C"/>
    <property type="match status" value="1"/>
</dbReference>
<dbReference type="Pfam" id="PF00440">
    <property type="entry name" value="TetR_N"/>
    <property type="match status" value="1"/>
</dbReference>
<dbReference type="SUPFAM" id="SSF46689">
    <property type="entry name" value="Homeodomain-like"/>
    <property type="match status" value="1"/>
</dbReference>
<dbReference type="SUPFAM" id="SSF48498">
    <property type="entry name" value="Tetracyclin repressor-like, C-terminal domain"/>
    <property type="match status" value="1"/>
</dbReference>
<dbReference type="PROSITE" id="PS01081">
    <property type="entry name" value="HTH_TETR_1"/>
    <property type="match status" value="1"/>
</dbReference>
<dbReference type="PROSITE" id="PS50977">
    <property type="entry name" value="HTH_TETR_2"/>
    <property type="match status" value="1"/>
</dbReference>
<reference key="1">
    <citation type="submission" date="2008-02" db="EMBL/GenBank/DDBJ databases">
        <title>Complete sequence of Escherichia coli C str. ATCC 8739.</title>
        <authorList>
            <person name="Copeland A."/>
            <person name="Lucas S."/>
            <person name="Lapidus A."/>
            <person name="Glavina del Rio T."/>
            <person name="Dalin E."/>
            <person name="Tice H."/>
            <person name="Bruce D."/>
            <person name="Goodwin L."/>
            <person name="Pitluck S."/>
            <person name="Kiss H."/>
            <person name="Brettin T."/>
            <person name="Detter J.C."/>
            <person name="Han C."/>
            <person name="Kuske C.R."/>
            <person name="Schmutz J."/>
            <person name="Larimer F."/>
            <person name="Land M."/>
            <person name="Hauser L."/>
            <person name="Kyrpides N."/>
            <person name="Mikhailova N."/>
            <person name="Ingram L."/>
            <person name="Richardson P."/>
        </authorList>
    </citation>
    <scope>NUCLEOTIDE SEQUENCE [LARGE SCALE GENOMIC DNA]</scope>
    <source>
        <strain>ATCC 8739 / DSM 1576 / NBRC 3972 / NCIMB 8545 / WDCM 00012 / Crooks</strain>
    </source>
</reference>